<feature type="chain" id="PRO_0000349736" description="tRNA-specific 2-thiouridylase MnmA">
    <location>
        <begin position="1"/>
        <end position="377"/>
    </location>
</feature>
<feature type="region of interest" description="Interaction with target base in tRNA" evidence="1">
    <location>
        <begin position="104"/>
        <end position="106"/>
    </location>
</feature>
<feature type="region of interest" description="Interaction with tRNA" evidence="1">
    <location>
        <begin position="159"/>
        <end position="161"/>
    </location>
</feature>
<feature type="region of interest" description="Interaction with tRNA" evidence="1">
    <location>
        <begin position="324"/>
        <end position="325"/>
    </location>
</feature>
<feature type="active site" description="Nucleophile" evidence="1">
    <location>
        <position position="109"/>
    </location>
</feature>
<feature type="active site" description="Cysteine persulfide intermediate" evidence="1">
    <location>
        <position position="209"/>
    </location>
</feature>
<feature type="binding site" evidence="1">
    <location>
        <begin position="18"/>
        <end position="25"/>
    </location>
    <ligand>
        <name>ATP</name>
        <dbReference type="ChEBI" id="CHEBI:30616"/>
    </ligand>
</feature>
<feature type="binding site" evidence="1">
    <location>
        <position position="44"/>
    </location>
    <ligand>
        <name>ATP</name>
        <dbReference type="ChEBI" id="CHEBI:30616"/>
    </ligand>
</feature>
<feature type="binding site" evidence="1">
    <location>
        <position position="134"/>
    </location>
    <ligand>
        <name>ATP</name>
        <dbReference type="ChEBI" id="CHEBI:30616"/>
    </ligand>
</feature>
<feature type="site" description="Interaction with tRNA" evidence="1">
    <location>
        <position position="135"/>
    </location>
</feature>
<feature type="site" description="Interaction with tRNA" evidence="1">
    <location>
        <position position="357"/>
    </location>
</feature>
<feature type="disulfide bond" description="Alternate" evidence="1">
    <location>
        <begin position="109"/>
        <end position="209"/>
    </location>
</feature>
<comment type="function">
    <text evidence="1">Catalyzes the 2-thiolation of uridine at the wobble position (U34) of tRNA, leading to the formation of s(2)U34.</text>
</comment>
<comment type="catalytic activity">
    <reaction evidence="1">
        <text>S-sulfanyl-L-cysteinyl-[protein] + uridine(34) in tRNA + AH2 + ATP = 2-thiouridine(34) in tRNA + L-cysteinyl-[protein] + A + AMP + diphosphate + H(+)</text>
        <dbReference type="Rhea" id="RHEA:47032"/>
        <dbReference type="Rhea" id="RHEA-COMP:10131"/>
        <dbReference type="Rhea" id="RHEA-COMP:11726"/>
        <dbReference type="Rhea" id="RHEA-COMP:11727"/>
        <dbReference type="Rhea" id="RHEA-COMP:11728"/>
        <dbReference type="ChEBI" id="CHEBI:13193"/>
        <dbReference type="ChEBI" id="CHEBI:15378"/>
        <dbReference type="ChEBI" id="CHEBI:17499"/>
        <dbReference type="ChEBI" id="CHEBI:29950"/>
        <dbReference type="ChEBI" id="CHEBI:30616"/>
        <dbReference type="ChEBI" id="CHEBI:33019"/>
        <dbReference type="ChEBI" id="CHEBI:61963"/>
        <dbReference type="ChEBI" id="CHEBI:65315"/>
        <dbReference type="ChEBI" id="CHEBI:87170"/>
        <dbReference type="ChEBI" id="CHEBI:456215"/>
        <dbReference type="EC" id="2.8.1.13"/>
    </reaction>
</comment>
<comment type="subcellular location">
    <subcellularLocation>
        <location evidence="1">Cytoplasm</location>
    </subcellularLocation>
</comment>
<comment type="similarity">
    <text evidence="1">Belongs to the MnmA/TRMU family.</text>
</comment>
<reference key="1">
    <citation type="journal article" date="2005" name="Science">
        <title>Life at depth: Photobacterium profundum genome sequence and expression analysis.</title>
        <authorList>
            <person name="Vezzi A."/>
            <person name="Campanaro S."/>
            <person name="D'Angelo M."/>
            <person name="Simonato F."/>
            <person name="Vitulo N."/>
            <person name="Lauro F.M."/>
            <person name="Cestaro A."/>
            <person name="Malacrida G."/>
            <person name="Simionati B."/>
            <person name="Cannata N."/>
            <person name="Romualdi C."/>
            <person name="Bartlett D.H."/>
            <person name="Valle G."/>
        </authorList>
    </citation>
    <scope>NUCLEOTIDE SEQUENCE [LARGE SCALE GENOMIC DNA]</scope>
    <source>
        <strain>ATCC BAA-1253 / SS9</strain>
    </source>
</reference>
<accession>Q6LT18</accession>
<name>MNMA_PHOPR</name>
<organism>
    <name type="scientific">Photobacterium profundum (strain SS9)</name>
    <dbReference type="NCBI Taxonomy" id="298386"/>
    <lineage>
        <taxon>Bacteria</taxon>
        <taxon>Pseudomonadati</taxon>
        <taxon>Pseudomonadota</taxon>
        <taxon>Gammaproteobacteria</taxon>
        <taxon>Vibrionales</taxon>
        <taxon>Vibrionaceae</taxon>
        <taxon>Photobacterium</taxon>
    </lineage>
</organism>
<proteinExistence type="inferred from homology"/>
<gene>
    <name evidence="1" type="primary">mnmA</name>
    <name type="ordered locus">PBPRA1147</name>
</gene>
<keyword id="KW-0067">ATP-binding</keyword>
<keyword id="KW-0963">Cytoplasm</keyword>
<keyword id="KW-1015">Disulfide bond</keyword>
<keyword id="KW-0547">Nucleotide-binding</keyword>
<keyword id="KW-1185">Reference proteome</keyword>
<keyword id="KW-0694">RNA-binding</keyword>
<keyword id="KW-0808">Transferase</keyword>
<keyword id="KW-0819">tRNA processing</keyword>
<keyword id="KW-0820">tRNA-binding</keyword>
<dbReference type="EC" id="2.8.1.13" evidence="1"/>
<dbReference type="EMBL" id="CR378666">
    <property type="protein sequence ID" value="CAG19558.1"/>
    <property type="molecule type" value="Genomic_DNA"/>
</dbReference>
<dbReference type="SMR" id="Q6LT18"/>
<dbReference type="STRING" id="298386.PBPRA1147"/>
<dbReference type="KEGG" id="ppr:PBPRA1147"/>
<dbReference type="eggNOG" id="COG0482">
    <property type="taxonomic scope" value="Bacteria"/>
</dbReference>
<dbReference type="HOGENOM" id="CLU_035188_1_0_6"/>
<dbReference type="Proteomes" id="UP000000593">
    <property type="component" value="Chromosome 1"/>
</dbReference>
<dbReference type="GO" id="GO:0005737">
    <property type="term" value="C:cytoplasm"/>
    <property type="evidence" value="ECO:0007669"/>
    <property type="project" value="UniProtKB-SubCell"/>
</dbReference>
<dbReference type="GO" id="GO:0005524">
    <property type="term" value="F:ATP binding"/>
    <property type="evidence" value="ECO:0007669"/>
    <property type="project" value="UniProtKB-KW"/>
</dbReference>
<dbReference type="GO" id="GO:0000049">
    <property type="term" value="F:tRNA binding"/>
    <property type="evidence" value="ECO:0007669"/>
    <property type="project" value="UniProtKB-KW"/>
</dbReference>
<dbReference type="GO" id="GO:0103016">
    <property type="term" value="F:tRNA-uridine 2-sulfurtransferase activity"/>
    <property type="evidence" value="ECO:0007669"/>
    <property type="project" value="UniProtKB-EC"/>
</dbReference>
<dbReference type="GO" id="GO:0002143">
    <property type="term" value="P:tRNA wobble position uridine thiolation"/>
    <property type="evidence" value="ECO:0007669"/>
    <property type="project" value="TreeGrafter"/>
</dbReference>
<dbReference type="CDD" id="cd01998">
    <property type="entry name" value="MnmA_TRMU-like"/>
    <property type="match status" value="1"/>
</dbReference>
<dbReference type="FunFam" id="2.30.30.280:FF:000001">
    <property type="entry name" value="tRNA-specific 2-thiouridylase MnmA"/>
    <property type="match status" value="1"/>
</dbReference>
<dbReference type="FunFam" id="2.40.30.10:FF:000023">
    <property type="entry name" value="tRNA-specific 2-thiouridylase MnmA"/>
    <property type="match status" value="1"/>
</dbReference>
<dbReference type="FunFam" id="3.40.50.620:FF:000004">
    <property type="entry name" value="tRNA-specific 2-thiouridylase MnmA"/>
    <property type="match status" value="1"/>
</dbReference>
<dbReference type="Gene3D" id="2.30.30.280">
    <property type="entry name" value="Adenine nucleotide alpha hydrolases-like domains"/>
    <property type="match status" value="1"/>
</dbReference>
<dbReference type="Gene3D" id="3.40.50.620">
    <property type="entry name" value="HUPs"/>
    <property type="match status" value="1"/>
</dbReference>
<dbReference type="Gene3D" id="2.40.30.10">
    <property type="entry name" value="Translation factors"/>
    <property type="match status" value="1"/>
</dbReference>
<dbReference type="HAMAP" id="MF_00144">
    <property type="entry name" value="tRNA_thiouridyl_MnmA"/>
    <property type="match status" value="1"/>
</dbReference>
<dbReference type="InterPro" id="IPR004506">
    <property type="entry name" value="MnmA-like"/>
</dbReference>
<dbReference type="InterPro" id="IPR046885">
    <property type="entry name" value="MnmA-like_C"/>
</dbReference>
<dbReference type="InterPro" id="IPR046884">
    <property type="entry name" value="MnmA-like_central"/>
</dbReference>
<dbReference type="InterPro" id="IPR023382">
    <property type="entry name" value="MnmA-like_central_sf"/>
</dbReference>
<dbReference type="InterPro" id="IPR014729">
    <property type="entry name" value="Rossmann-like_a/b/a_fold"/>
</dbReference>
<dbReference type="NCBIfam" id="NF001138">
    <property type="entry name" value="PRK00143.1"/>
    <property type="match status" value="1"/>
</dbReference>
<dbReference type="NCBIfam" id="TIGR00420">
    <property type="entry name" value="trmU"/>
    <property type="match status" value="1"/>
</dbReference>
<dbReference type="PANTHER" id="PTHR11933:SF5">
    <property type="entry name" value="MITOCHONDRIAL TRNA-SPECIFIC 2-THIOURIDYLASE 1"/>
    <property type="match status" value="1"/>
</dbReference>
<dbReference type="PANTHER" id="PTHR11933">
    <property type="entry name" value="TRNA 5-METHYLAMINOMETHYL-2-THIOURIDYLATE -METHYLTRANSFERASE"/>
    <property type="match status" value="1"/>
</dbReference>
<dbReference type="Pfam" id="PF03054">
    <property type="entry name" value="tRNA_Me_trans"/>
    <property type="match status" value="1"/>
</dbReference>
<dbReference type="Pfam" id="PF20258">
    <property type="entry name" value="tRNA_Me_trans_C"/>
    <property type="match status" value="1"/>
</dbReference>
<dbReference type="Pfam" id="PF20259">
    <property type="entry name" value="tRNA_Me_trans_M"/>
    <property type="match status" value="1"/>
</dbReference>
<dbReference type="SUPFAM" id="SSF52402">
    <property type="entry name" value="Adenine nucleotide alpha hydrolases-like"/>
    <property type="match status" value="1"/>
</dbReference>
<protein>
    <recommendedName>
        <fullName evidence="1">tRNA-specific 2-thiouridylase MnmA</fullName>
        <ecNumber evidence="1">2.8.1.13</ecNumber>
    </recommendedName>
</protein>
<sequence>MRLKRNMSDNSQKKVIVGMSGGVDSSVSAYLLLQQGYQVEGLFMKNWEEDDNEEYCSAAEDLADAQAVCDKLGIHLHTINFAAEYWDNVFEYFLAEYKAGRTPNPDILCNKEIKFKAFLEFADEVLEADYIAMGHYTRRSFPTAEGEKPKMLRGVDSNKDQSYFLYTLSHEQIARSLFPVGELEKPEVRRIAEEQDLITAKKKDSTGICFIGERKFTEFLGKYLPAQPGKIETADEGKVIGEHQGLMYHTLGQRKGLHIGGQKGGNGLEDAWYVVDKDLKRNVLIVGQGKDHPRLKSNGLVASQLDWVDRQPIRETMTCTVKTRYRQEDIPCTIIPIDDENIKVIFDEPQIAVTPGQSAVFYSNEICLGGGIIEQRI</sequence>
<evidence type="ECO:0000255" key="1">
    <source>
        <dbReference type="HAMAP-Rule" id="MF_00144"/>
    </source>
</evidence>